<proteinExistence type="inferred from homology"/>
<name>LIPA_BRUMB</name>
<keyword id="KW-0004">4Fe-4S</keyword>
<keyword id="KW-0963">Cytoplasm</keyword>
<keyword id="KW-0408">Iron</keyword>
<keyword id="KW-0411">Iron-sulfur</keyword>
<keyword id="KW-0479">Metal-binding</keyword>
<keyword id="KW-0949">S-adenosyl-L-methionine</keyword>
<keyword id="KW-0808">Transferase</keyword>
<sequence>MVTVLNTVNQSGRLRHPEKAHRPDNEVLKKPDWIRVKAPVSRGYGETREIVRSNKLVTVCEEAGCPNIGECWEKKHATFMIMGEICTRACAFCNISTGIPNALDPNEPENIAKAVKQMGLTHVVITSVDRDDLADGGAHHFAEVIKAVREAAPATTIEILTPDFLRKEGALEIVVKARPDVFNHNLETVPSKYLKVRPGARYFHSIRLLQRVKELDPTIFTKSGIMVGLGEERNEILQLMDDLRSADVDFMTIGQYLQPTRKHHPVIRFVKPDEFKSFETIGKTKGFLLVASSPLTRSSHHAGEDFAKLKAAREALYASRAS</sequence>
<dbReference type="EC" id="2.8.1.8" evidence="1"/>
<dbReference type="EMBL" id="CP001488">
    <property type="protein sequence ID" value="ACO00903.1"/>
    <property type="molecule type" value="Genomic_DNA"/>
</dbReference>
<dbReference type="RefSeq" id="WP_002964253.1">
    <property type="nucleotide sequence ID" value="NC_012441.1"/>
</dbReference>
<dbReference type="SMR" id="C0RJ95"/>
<dbReference type="GeneID" id="97533623"/>
<dbReference type="KEGG" id="bmi:BMEA_A1169"/>
<dbReference type="HOGENOM" id="CLU_033144_2_1_5"/>
<dbReference type="UniPathway" id="UPA00538">
    <property type="reaction ID" value="UER00593"/>
</dbReference>
<dbReference type="Proteomes" id="UP000001748">
    <property type="component" value="Chromosome I"/>
</dbReference>
<dbReference type="GO" id="GO:0005737">
    <property type="term" value="C:cytoplasm"/>
    <property type="evidence" value="ECO:0007669"/>
    <property type="project" value="UniProtKB-SubCell"/>
</dbReference>
<dbReference type="GO" id="GO:0051539">
    <property type="term" value="F:4 iron, 4 sulfur cluster binding"/>
    <property type="evidence" value="ECO:0007669"/>
    <property type="project" value="UniProtKB-UniRule"/>
</dbReference>
<dbReference type="GO" id="GO:0016992">
    <property type="term" value="F:lipoate synthase activity"/>
    <property type="evidence" value="ECO:0007669"/>
    <property type="project" value="UniProtKB-UniRule"/>
</dbReference>
<dbReference type="GO" id="GO:0046872">
    <property type="term" value="F:metal ion binding"/>
    <property type="evidence" value="ECO:0007669"/>
    <property type="project" value="UniProtKB-KW"/>
</dbReference>
<dbReference type="CDD" id="cd01335">
    <property type="entry name" value="Radical_SAM"/>
    <property type="match status" value="1"/>
</dbReference>
<dbReference type="FunFam" id="3.20.20.70:FF:000040">
    <property type="entry name" value="Lipoyl synthase"/>
    <property type="match status" value="1"/>
</dbReference>
<dbReference type="Gene3D" id="3.20.20.70">
    <property type="entry name" value="Aldolase class I"/>
    <property type="match status" value="1"/>
</dbReference>
<dbReference type="HAMAP" id="MF_00206">
    <property type="entry name" value="Lipoyl_synth"/>
    <property type="match status" value="1"/>
</dbReference>
<dbReference type="InterPro" id="IPR013785">
    <property type="entry name" value="Aldolase_TIM"/>
</dbReference>
<dbReference type="InterPro" id="IPR006638">
    <property type="entry name" value="Elp3/MiaA/NifB-like_rSAM"/>
</dbReference>
<dbReference type="InterPro" id="IPR031691">
    <property type="entry name" value="LIAS_N"/>
</dbReference>
<dbReference type="InterPro" id="IPR003698">
    <property type="entry name" value="Lipoyl_synth"/>
</dbReference>
<dbReference type="InterPro" id="IPR007197">
    <property type="entry name" value="rSAM"/>
</dbReference>
<dbReference type="NCBIfam" id="TIGR00510">
    <property type="entry name" value="lipA"/>
    <property type="match status" value="1"/>
</dbReference>
<dbReference type="NCBIfam" id="NF004019">
    <property type="entry name" value="PRK05481.1"/>
    <property type="match status" value="1"/>
</dbReference>
<dbReference type="NCBIfam" id="NF009544">
    <property type="entry name" value="PRK12928.1"/>
    <property type="match status" value="1"/>
</dbReference>
<dbReference type="PANTHER" id="PTHR10949">
    <property type="entry name" value="LIPOYL SYNTHASE"/>
    <property type="match status" value="1"/>
</dbReference>
<dbReference type="PANTHER" id="PTHR10949:SF0">
    <property type="entry name" value="LIPOYL SYNTHASE, MITOCHONDRIAL"/>
    <property type="match status" value="1"/>
</dbReference>
<dbReference type="Pfam" id="PF16881">
    <property type="entry name" value="LIAS_N"/>
    <property type="match status" value="1"/>
</dbReference>
<dbReference type="Pfam" id="PF04055">
    <property type="entry name" value="Radical_SAM"/>
    <property type="match status" value="1"/>
</dbReference>
<dbReference type="PIRSF" id="PIRSF005963">
    <property type="entry name" value="Lipoyl_synth"/>
    <property type="match status" value="1"/>
</dbReference>
<dbReference type="SFLD" id="SFLDF00271">
    <property type="entry name" value="lipoyl_synthase"/>
    <property type="match status" value="1"/>
</dbReference>
<dbReference type="SFLD" id="SFLDG01058">
    <property type="entry name" value="lipoyl_synthase_like"/>
    <property type="match status" value="1"/>
</dbReference>
<dbReference type="SMART" id="SM00729">
    <property type="entry name" value="Elp3"/>
    <property type="match status" value="1"/>
</dbReference>
<dbReference type="SUPFAM" id="SSF102114">
    <property type="entry name" value="Radical SAM enzymes"/>
    <property type="match status" value="1"/>
</dbReference>
<dbReference type="PROSITE" id="PS51918">
    <property type="entry name" value="RADICAL_SAM"/>
    <property type="match status" value="1"/>
</dbReference>
<accession>C0RJ95</accession>
<comment type="function">
    <text evidence="1">Catalyzes the radical-mediated insertion of two sulfur atoms into the C-6 and C-8 positions of the octanoyl moiety bound to the lipoyl domains of lipoate-dependent enzymes, thereby converting the octanoylated domains into lipoylated derivatives.</text>
</comment>
<comment type="catalytic activity">
    <reaction evidence="1">
        <text>[[Fe-S] cluster scaffold protein carrying a second [4Fe-4S](2+) cluster] + N(6)-octanoyl-L-lysyl-[protein] + 2 oxidized [2Fe-2S]-[ferredoxin] + 2 S-adenosyl-L-methionine + 4 H(+) = [[Fe-S] cluster scaffold protein] + N(6)-[(R)-dihydrolipoyl]-L-lysyl-[protein] + 4 Fe(3+) + 2 hydrogen sulfide + 2 5'-deoxyadenosine + 2 L-methionine + 2 reduced [2Fe-2S]-[ferredoxin]</text>
        <dbReference type="Rhea" id="RHEA:16585"/>
        <dbReference type="Rhea" id="RHEA-COMP:9928"/>
        <dbReference type="Rhea" id="RHEA-COMP:10000"/>
        <dbReference type="Rhea" id="RHEA-COMP:10001"/>
        <dbReference type="Rhea" id="RHEA-COMP:10475"/>
        <dbReference type="Rhea" id="RHEA-COMP:14568"/>
        <dbReference type="Rhea" id="RHEA-COMP:14569"/>
        <dbReference type="ChEBI" id="CHEBI:15378"/>
        <dbReference type="ChEBI" id="CHEBI:17319"/>
        <dbReference type="ChEBI" id="CHEBI:29034"/>
        <dbReference type="ChEBI" id="CHEBI:29919"/>
        <dbReference type="ChEBI" id="CHEBI:33722"/>
        <dbReference type="ChEBI" id="CHEBI:33737"/>
        <dbReference type="ChEBI" id="CHEBI:33738"/>
        <dbReference type="ChEBI" id="CHEBI:57844"/>
        <dbReference type="ChEBI" id="CHEBI:59789"/>
        <dbReference type="ChEBI" id="CHEBI:78809"/>
        <dbReference type="ChEBI" id="CHEBI:83100"/>
        <dbReference type="EC" id="2.8.1.8"/>
    </reaction>
</comment>
<comment type="cofactor">
    <cofactor evidence="1">
        <name>[4Fe-4S] cluster</name>
        <dbReference type="ChEBI" id="CHEBI:49883"/>
    </cofactor>
    <text evidence="1">Binds 2 [4Fe-4S] clusters per subunit. One cluster is coordinated with 3 cysteines and an exchangeable S-adenosyl-L-methionine.</text>
</comment>
<comment type="pathway">
    <text evidence="1">Protein modification; protein lipoylation via endogenous pathway; protein N(6)-(lipoyl)lysine from octanoyl-[acyl-carrier-protein]: step 2/2.</text>
</comment>
<comment type="subcellular location">
    <subcellularLocation>
        <location evidence="1">Cytoplasm</location>
    </subcellularLocation>
</comment>
<comment type="similarity">
    <text evidence="1">Belongs to the radical SAM superfamily. Lipoyl synthase family.</text>
</comment>
<evidence type="ECO:0000255" key="1">
    <source>
        <dbReference type="HAMAP-Rule" id="MF_00206"/>
    </source>
</evidence>
<evidence type="ECO:0000255" key="2">
    <source>
        <dbReference type="PROSITE-ProRule" id="PRU01266"/>
    </source>
</evidence>
<evidence type="ECO:0000256" key="3">
    <source>
        <dbReference type="SAM" id="MobiDB-lite"/>
    </source>
</evidence>
<organism>
    <name type="scientific">Brucella melitensis biotype 2 (strain ATCC 23457)</name>
    <dbReference type="NCBI Taxonomy" id="546272"/>
    <lineage>
        <taxon>Bacteria</taxon>
        <taxon>Pseudomonadati</taxon>
        <taxon>Pseudomonadota</taxon>
        <taxon>Alphaproteobacteria</taxon>
        <taxon>Hyphomicrobiales</taxon>
        <taxon>Brucellaceae</taxon>
        <taxon>Brucella/Ochrobactrum group</taxon>
        <taxon>Brucella</taxon>
    </lineage>
</organism>
<gene>
    <name evidence="1" type="primary">lipA</name>
    <name type="ordered locus">BMEA_A1169</name>
</gene>
<protein>
    <recommendedName>
        <fullName evidence="1">Lipoyl synthase</fullName>
        <ecNumber evidence="1">2.8.1.8</ecNumber>
    </recommendedName>
    <alternativeName>
        <fullName evidence="1">Lip-syn</fullName>
        <shortName evidence="1">LS</shortName>
    </alternativeName>
    <alternativeName>
        <fullName evidence="1">Lipoate synthase</fullName>
    </alternativeName>
    <alternativeName>
        <fullName evidence="1">Lipoic acid synthase</fullName>
    </alternativeName>
    <alternativeName>
        <fullName evidence="1">Sulfur insertion protein LipA</fullName>
    </alternativeName>
</protein>
<feature type="chain" id="PRO_1000124622" description="Lipoyl synthase">
    <location>
        <begin position="1"/>
        <end position="322"/>
    </location>
</feature>
<feature type="domain" description="Radical SAM core" evidence="2">
    <location>
        <begin position="72"/>
        <end position="288"/>
    </location>
</feature>
<feature type="region of interest" description="Disordered" evidence="3">
    <location>
        <begin position="1"/>
        <end position="22"/>
    </location>
</feature>
<feature type="compositionally biased region" description="Polar residues" evidence="3">
    <location>
        <begin position="1"/>
        <end position="12"/>
    </location>
</feature>
<feature type="binding site" evidence="1">
    <location>
        <position position="60"/>
    </location>
    <ligand>
        <name>[4Fe-4S] cluster</name>
        <dbReference type="ChEBI" id="CHEBI:49883"/>
        <label>1</label>
    </ligand>
</feature>
<feature type="binding site" evidence="1">
    <location>
        <position position="65"/>
    </location>
    <ligand>
        <name>[4Fe-4S] cluster</name>
        <dbReference type="ChEBI" id="CHEBI:49883"/>
        <label>1</label>
    </ligand>
</feature>
<feature type="binding site" evidence="1">
    <location>
        <position position="71"/>
    </location>
    <ligand>
        <name>[4Fe-4S] cluster</name>
        <dbReference type="ChEBI" id="CHEBI:49883"/>
        <label>1</label>
    </ligand>
</feature>
<feature type="binding site" evidence="1">
    <location>
        <position position="86"/>
    </location>
    <ligand>
        <name>[4Fe-4S] cluster</name>
        <dbReference type="ChEBI" id="CHEBI:49883"/>
        <label>2</label>
        <note>4Fe-4S-S-AdoMet</note>
    </ligand>
</feature>
<feature type="binding site" evidence="1">
    <location>
        <position position="90"/>
    </location>
    <ligand>
        <name>[4Fe-4S] cluster</name>
        <dbReference type="ChEBI" id="CHEBI:49883"/>
        <label>2</label>
        <note>4Fe-4S-S-AdoMet</note>
    </ligand>
</feature>
<feature type="binding site" evidence="1">
    <location>
        <position position="93"/>
    </location>
    <ligand>
        <name>[4Fe-4S] cluster</name>
        <dbReference type="ChEBI" id="CHEBI:49883"/>
        <label>2</label>
        <note>4Fe-4S-S-AdoMet</note>
    </ligand>
</feature>
<feature type="binding site" evidence="1">
    <location>
        <position position="299"/>
    </location>
    <ligand>
        <name>[4Fe-4S] cluster</name>
        <dbReference type="ChEBI" id="CHEBI:49883"/>
        <label>1</label>
    </ligand>
</feature>
<reference key="1">
    <citation type="submission" date="2009-03" db="EMBL/GenBank/DDBJ databases">
        <title>Brucella melitensis ATCC 23457 whole genome shotgun sequencing project.</title>
        <authorList>
            <person name="Setubal J.C."/>
            <person name="Boyle S."/>
            <person name="Crasta O.R."/>
            <person name="Gillespie J.J."/>
            <person name="Kenyon R.W."/>
            <person name="Lu J."/>
            <person name="Mane S."/>
            <person name="Nagrani S."/>
            <person name="Shallom J.M."/>
            <person name="Shallom S."/>
            <person name="Shukla M."/>
            <person name="Snyder E.E."/>
            <person name="Sobral B.W."/>
            <person name="Wattam A.R."/>
            <person name="Will R."/>
            <person name="Williams K."/>
            <person name="Yoo H."/>
            <person name="Munk C."/>
            <person name="Tapia R."/>
            <person name="Han C."/>
            <person name="Detter J.C."/>
            <person name="Bruce D."/>
            <person name="Brettin T.S."/>
        </authorList>
    </citation>
    <scope>NUCLEOTIDE SEQUENCE [LARGE SCALE GENOMIC DNA]</scope>
    <source>
        <strain>ATCC 23457</strain>
    </source>
</reference>